<name>MUKB_SHISS</name>
<evidence type="ECO:0000255" key="1">
    <source>
        <dbReference type="HAMAP-Rule" id="MF_01800"/>
    </source>
</evidence>
<dbReference type="EMBL" id="CP000038">
    <property type="protein sequence ID" value="AAZ87665.1"/>
    <property type="molecule type" value="Genomic_DNA"/>
</dbReference>
<dbReference type="RefSeq" id="WP_000572709.1">
    <property type="nucleotide sequence ID" value="NC_007384.1"/>
</dbReference>
<dbReference type="SMR" id="Q3Z3J7"/>
<dbReference type="KEGG" id="ssn:SSON_0926"/>
<dbReference type="HOGENOM" id="CLU_004430_0_0_6"/>
<dbReference type="Proteomes" id="UP000002529">
    <property type="component" value="Chromosome"/>
</dbReference>
<dbReference type="GO" id="GO:0005737">
    <property type="term" value="C:cytoplasm"/>
    <property type="evidence" value="ECO:0007669"/>
    <property type="project" value="UniProtKB-UniRule"/>
</dbReference>
<dbReference type="GO" id="GO:0009295">
    <property type="term" value="C:nucleoid"/>
    <property type="evidence" value="ECO:0007669"/>
    <property type="project" value="UniProtKB-SubCell"/>
</dbReference>
<dbReference type="GO" id="GO:0005524">
    <property type="term" value="F:ATP binding"/>
    <property type="evidence" value="ECO:0007669"/>
    <property type="project" value="UniProtKB-UniRule"/>
</dbReference>
<dbReference type="GO" id="GO:0003677">
    <property type="term" value="F:DNA binding"/>
    <property type="evidence" value="ECO:0007669"/>
    <property type="project" value="UniProtKB-UniRule"/>
</dbReference>
<dbReference type="GO" id="GO:0051301">
    <property type="term" value="P:cell division"/>
    <property type="evidence" value="ECO:0007669"/>
    <property type="project" value="UniProtKB-KW"/>
</dbReference>
<dbReference type="GO" id="GO:0030261">
    <property type="term" value="P:chromosome condensation"/>
    <property type="evidence" value="ECO:0007669"/>
    <property type="project" value="UniProtKB-KW"/>
</dbReference>
<dbReference type="GO" id="GO:0007059">
    <property type="term" value="P:chromosome segregation"/>
    <property type="evidence" value="ECO:0007669"/>
    <property type="project" value="UniProtKB-UniRule"/>
</dbReference>
<dbReference type="GO" id="GO:0006260">
    <property type="term" value="P:DNA replication"/>
    <property type="evidence" value="ECO:0007669"/>
    <property type="project" value="UniProtKB-UniRule"/>
</dbReference>
<dbReference type="FunFam" id="1.20.58.850:FF:000001">
    <property type="entry name" value="Chromosome partition protein MukB"/>
    <property type="match status" value="1"/>
</dbReference>
<dbReference type="FunFam" id="3.30.70.3500:FF:000001">
    <property type="entry name" value="Chromosome partition protein MukB"/>
    <property type="match status" value="1"/>
</dbReference>
<dbReference type="FunFam" id="3.40.1140.10:FF:000001">
    <property type="entry name" value="Chromosome partition protein MukB"/>
    <property type="match status" value="1"/>
</dbReference>
<dbReference type="FunFam" id="3.40.1140.10:FF:000002">
    <property type="entry name" value="Chromosome partition protein MukB"/>
    <property type="match status" value="1"/>
</dbReference>
<dbReference type="Gene3D" id="1.10.287.1490">
    <property type="match status" value="1"/>
</dbReference>
<dbReference type="Gene3D" id="1.20.58.850">
    <property type="match status" value="1"/>
</dbReference>
<dbReference type="Gene3D" id="3.40.1140.10">
    <property type="match status" value="2"/>
</dbReference>
<dbReference type="Gene3D" id="1.20.5.420">
    <property type="entry name" value="Immunoglobulin FC, subunit C"/>
    <property type="match status" value="1"/>
</dbReference>
<dbReference type="Gene3D" id="3.30.70.3500">
    <property type="entry name" value="MukB, hinge domain"/>
    <property type="match status" value="1"/>
</dbReference>
<dbReference type="HAMAP" id="MF_01800">
    <property type="entry name" value="MukB"/>
    <property type="match status" value="1"/>
</dbReference>
<dbReference type="InterPro" id="IPR012090">
    <property type="entry name" value="MukB"/>
</dbReference>
<dbReference type="InterPro" id="IPR050308">
    <property type="entry name" value="MukB/SMC"/>
</dbReference>
<dbReference type="InterPro" id="IPR032520">
    <property type="entry name" value="MukB_hinge"/>
</dbReference>
<dbReference type="InterPro" id="IPR042501">
    <property type="entry name" value="MukB_hinge_sf"/>
</dbReference>
<dbReference type="InterPro" id="IPR007406">
    <property type="entry name" value="MukB_N_dom"/>
</dbReference>
<dbReference type="InterPro" id="IPR027417">
    <property type="entry name" value="P-loop_NTPase"/>
</dbReference>
<dbReference type="NCBIfam" id="NF003422">
    <property type="entry name" value="PRK04863.1"/>
    <property type="match status" value="1"/>
</dbReference>
<dbReference type="PANTHER" id="PTHR42963">
    <property type="entry name" value="CHROMOSOME PARTITION PROTEIN MUKB"/>
    <property type="match status" value="1"/>
</dbReference>
<dbReference type="PANTHER" id="PTHR42963:SF1">
    <property type="entry name" value="DUF4476 DOMAIN-CONTAINING PROTEIN"/>
    <property type="match status" value="1"/>
</dbReference>
<dbReference type="Pfam" id="PF04310">
    <property type="entry name" value="MukB"/>
    <property type="match status" value="1"/>
</dbReference>
<dbReference type="Pfam" id="PF16330">
    <property type="entry name" value="MukB_hinge"/>
    <property type="match status" value="1"/>
</dbReference>
<dbReference type="Pfam" id="PF13558">
    <property type="entry name" value="SbcC_Walker_B"/>
    <property type="match status" value="1"/>
</dbReference>
<dbReference type="PIRSF" id="PIRSF005246">
    <property type="entry name" value="MukB"/>
    <property type="match status" value="1"/>
</dbReference>
<dbReference type="SUPFAM" id="SSF52540">
    <property type="entry name" value="P-loop containing nucleoside triphosphate hydrolases"/>
    <property type="match status" value="2"/>
</dbReference>
<organism>
    <name type="scientific">Shigella sonnei (strain Ss046)</name>
    <dbReference type="NCBI Taxonomy" id="300269"/>
    <lineage>
        <taxon>Bacteria</taxon>
        <taxon>Pseudomonadati</taxon>
        <taxon>Pseudomonadota</taxon>
        <taxon>Gammaproteobacteria</taxon>
        <taxon>Enterobacterales</taxon>
        <taxon>Enterobacteriaceae</taxon>
        <taxon>Shigella</taxon>
    </lineage>
</organism>
<sequence length="1486" mass="170331">MIERGKFRSLTLINWNGFFARTFDLDELVTTLSGGNGAGKSTTMAAFVTALIPDLTLLHFRNTTEAGATSGSRDKGLHGKLKAGVCYSMLDTINSRHQRVVVGVRLQQVAGRDRKVDIKPFAIQGLPMSVQPTQLVTETLNERQARVLPLNELKDKLEAMEGVQFKQFNSITDYHSLMFDLGIIARRLRSASDRSKFYRLIEASLYGGISSAITRSLRDYLLPENSGVRKAFQDMEAALRENRMTLEAIRVTQSDRDLFKHLISEATNYVAADYMRHANERRVHLDKALEFRRELHTSRQQLAAEQYKHVDMARELAEHNGAEGDLEADYQAASDHLNLVQTAQRQQEKIERYEADLDELQIRLEEQNEVVAEAIERQEENEARAEAAELEVDELKSQLADYQQALDVQQTRAIQYNQAIAALNRAKELCHLPDLTADSAAEWLETFQAKEQEATEKMLSLEQKMSMAQTAHSQFEQAYQLVVAINGPLARNEAWDVARELLREGVDQRHLAEQVQPLRMRLSELEQRLREQQEAERLLADFCKRQGKNFDIDELEALHQELEARIASLSDSVSNAREERMALRQEQEQLQSRIQSLMQRAPVWLAAQNSLNQLSEQCGEEFTSSQDVTEYLQQLLEREREAIVERDEVGARKNAVDEEIERLSQPGGSEDQRLNALAERFGGVLLSEIYDDVSLEDAPYFSALYGPSRHAIVVPDLSQVTEHLEGLTDCPEDLYLIEGDPQSFDDSVFSVDELEKAVVVKIADRQWRYSRFPEVPLFGRAARESRIESLHAEREVLSERFATLSFDVQKTQRLHQAFSRFIGSHLAVAFESDPEAEIRQLNSRRVELERALSNHENDNQQQRIQFEQAKEGVTALNRILPRLNLLADDSLADRVDEIRERLDEAQEAARFVQQFGNQLAKLEPIVSVLQSDPEQFEQLKEDYAYSQQMQRDARQQAFALTEVVQRRAHFSYSDSAEMLSGNSDLNEKLRERLEQAEAERTRAREALRGHAAQLSQYNQVLASLKSSYDTKKELLNDLQRELQDIGVRADSGAEERARIRRDELHAQLSNNRSRRNQLEKALTFCEAEMDNLTRKLRKLERDYFEMREQVVTAKAGWCAVMRMVKDNVVERRLHRRELAYLSADDLRSMSDKALGALRLAVADNEHLRDVLRMSEDPKRPERKIQFFVAVYQHLRERIRQDIIRTDDPVEAIEQMEIELSRLTEELTSREQKLAISSRSVANIIRKTIQREQNRIRMLNQGLQNVSFGQVNSVRLNVNVRETHAMLLDVLSEQHEQHQDLFNSNRLTFSEALAKLYQRLNPQIDMGQRTPQTIGEELLDYRNYLEMEVEVNRGSDGWLRAESGALSTGEAIGTGMSILVMVVQSWEDESRRLRGKDISPCRLLFLDEAARLDARSIATLFELCERLQMQLIIAAPENISPEKGTTYKLVRKVFQNTEHVHVVGLRGFAPQLPETLPGSDEAPSQES</sequence>
<feature type="chain" id="PRO_1000069915" description="Chromosome partition protein MukB">
    <location>
        <begin position="1"/>
        <end position="1486"/>
    </location>
</feature>
<feature type="region of interest" description="Flexible hinge" evidence="1">
    <location>
        <begin position="666"/>
        <end position="783"/>
    </location>
</feature>
<feature type="coiled-coil region" evidence="1">
    <location>
        <begin position="334"/>
        <end position="418"/>
    </location>
</feature>
<feature type="coiled-coil region" evidence="1">
    <location>
        <begin position="444"/>
        <end position="480"/>
    </location>
</feature>
<feature type="coiled-coil region" evidence="1">
    <location>
        <begin position="509"/>
        <end position="603"/>
    </location>
</feature>
<feature type="coiled-coil region" evidence="1">
    <location>
        <begin position="835"/>
        <end position="923"/>
    </location>
</feature>
<feature type="coiled-coil region" evidence="1">
    <location>
        <begin position="977"/>
        <end position="1115"/>
    </location>
</feature>
<feature type="coiled-coil region" evidence="1">
    <location>
        <begin position="1209"/>
        <end position="1266"/>
    </location>
</feature>
<feature type="binding site" evidence="1">
    <location>
        <begin position="34"/>
        <end position="41"/>
    </location>
    <ligand>
        <name>ATP</name>
        <dbReference type="ChEBI" id="CHEBI:30616"/>
    </ligand>
</feature>
<comment type="function">
    <text evidence="1">Plays a central role in chromosome condensation, segregation and cell cycle progression. Functions as a homodimer, which is essential for chromosome partition. Involved in negative DNA supercoiling in vivo, and by this means organize and compact chromosomes. May achieve or facilitate chromosome segregation by condensation DNA from both sides of a centrally located replisome during cell division.</text>
</comment>
<comment type="subunit">
    <text evidence="1">Homodimerization via its hinge domain. Binds to DNA via its C-terminal region. Interacts, and probably forms a ternary complex, with MukE and MukF via its C-terminal region. The complex formation is stimulated by calcium or magnesium. Interacts with tubulin-related protein FtsZ.</text>
</comment>
<comment type="subcellular location">
    <subcellularLocation>
        <location evidence="1">Cytoplasm</location>
        <location evidence="1">Nucleoid</location>
    </subcellularLocation>
    <text evidence="1">Restricted to the nucleoid region.</text>
</comment>
<comment type="domain">
    <text evidence="1">The hinge domain, which separates the large intramolecular coiled coil regions, allows the homodimerization, forming a V-shaped homodimer.</text>
</comment>
<comment type="similarity">
    <text evidence="1">Belongs to the SMC family. MukB subfamily.</text>
</comment>
<gene>
    <name evidence="1" type="primary">mukB</name>
    <name type="ordered locus">SSON_0926</name>
</gene>
<proteinExistence type="inferred from homology"/>
<protein>
    <recommendedName>
        <fullName evidence="1">Chromosome partition protein MukB</fullName>
    </recommendedName>
    <alternativeName>
        <fullName evidence="1">Structural maintenance of chromosome-related protein</fullName>
    </alternativeName>
</protein>
<accession>Q3Z3J7</accession>
<keyword id="KW-0067">ATP-binding</keyword>
<keyword id="KW-0131">Cell cycle</keyword>
<keyword id="KW-0132">Cell division</keyword>
<keyword id="KW-0159">Chromosome partition</keyword>
<keyword id="KW-0175">Coiled coil</keyword>
<keyword id="KW-0963">Cytoplasm</keyword>
<keyword id="KW-0226">DNA condensation</keyword>
<keyword id="KW-0238">DNA-binding</keyword>
<keyword id="KW-0547">Nucleotide-binding</keyword>
<keyword id="KW-1185">Reference proteome</keyword>
<reference key="1">
    <citation type="journal article" date="2005" name="Nucleic Acids Res.">
        <title>Genome dynamics and diversity of Shigella species, the etiologic agents of bacillary dysentery.</title>
        <authorList>
            <person name="Yang F."/>
            <person name="Yang J."/>
            <person name="Zhang X."/>
            <person name="Chen L."/>
            <person name="Jiang Y."/>
            <person name="Yan Y."/>
            <person name="Tang X."/>
            <person name="Wang J."/>
            <person name="Xiong Z."/>
            <person name="Dong J."/>
            <person name="Xue Y."/>
            <person name="Zhu Y."/>
            <person name="Xu X."/>
            <person name="Sun L."/>
            <person name="Chen S."/>
            <person name="Nie H."/>
            <person name="Peng J."/>
            <person name="Xu J."/>
            <person name="Wang Y."/>
            <person name="Yuan Z."/>
            <person name="Wen Y."/>
            <person name="Yao Z."/>
            <person name="Shen Y."/>
            <person name="Qiang B."/>
            <person name="Hou Y."/>
            <person name="Yu J."/>
            <person name="Jin Q."/>
        </authorList>
    </citation>
    <scope>NUCLEOTIDE SEQUENCE [LARGE SCALE GENOMIC DNA]</scope>
    <source>
        <strain>Ss046</strain>
    </source>
</reference>